<accession>O18806</accession>
<accession>O62730</accession>
<organism>
    <name type="scientific">Canis lupus familiaris</name>
    <name type="common">Dog</name>
    <name type="synonym">Canis familiaris</name>
    <dbReference type="NCBI Taxonomy" id="9615"/>
    <lineage>
        <taxon>Eukaryota</taxon>
        <taxon>Metazoa</taxon>
        <taxon>Chordata</taxon>
        <taxon>Craniata</taxon>
        <taxon>Vertebrata</taxon>
        <taxon>Euteleostomi</taxon>
        <taxon>Mammalia</taxon>
        <taxon>Eutheria</taxon>
        <taxon>Laurasiatheria</taxon>
        <taxon>Carnivora</taxon>
        <taxon>Caniformia</taxon>
        <taxon>Canidae</taxon>
        <taxon>Canis</taxon>
    </lineage>
</organism>
<dbReference type="EMBL" id="AF016234">
    <property type="protein sequence ID" value="AAB87412.1"/>
    <property type="molecule type" value="mRNA"/>
</dbReference>
<dbReference type="EMBL" id="AF049489">
    <property type="protein sequence ID" value="AAC05384.1"/>
    <property type="molecule type" value="mRNA"/>
</dbReference>
<dbReference type="RefSeq" id="NP_001003212.1">
    <property type="nucleotide sequence ID" value="NM_001003212.1"/>
</dbReference>
<dbReference type="SMR" id="O18806"/>
<dbReference type="FunCoup" id="O18806">
    <property type="interactions" value="49"/>
</dbReference>
<dbReference type="STRING" id="9615.ENSCAFP00000029035"/>
<dbReference type="GlyCosmos" id="O18806">
    <property type="glycosylation" value="29 sites, No reported glycans"/>
</dbReference>
<dbReference type="PaxDb" id="9612-ENSCAFP00000029035"/>
<dbReference type="GeneID" id="403875"/>
<dbReference type="KEGG" id="cfa:403875"/>
<dbReference type="CTD" id="2157"/>
<dbReference type="eggNOG" id="ENOG502QSFZ">
    <property type="taxonomic scope" value="Eukaryota"/>
</dbReference>
<dbReference type="InParanoid" id="O18806"/>
<dbReference type="OrthoDB" id="2121828at2759"/>
<dbReference type="Proteomes" id="UP000002254">
    <property type="component" value="Unplaced"/>
</dbReference>
<dbReference type="Proteomes" id="UP000694429">
    <property type="component" value="Unplaced"/>
</dbReference>
<dbReference type="Proteomes" id="UP000694542">
    <property type="component" value="Unplaced"/>
</dbReference>
<dbReference type="Proteomes" id="UP000805418">
    <property type="component" value="Unplaced"/>
</dbReference>
<dbReference type="GO" id="GO:0005615">
    <property type="term" value="C:extracellular space"/>
    <property type="evidence" value="ECO:0000318"/>
    <property type="project" value="GO_Central"/>
</dbReference>
<dbReference type="GO" id="GO:0005507">
    <property type="term" value="F:copper ion binding"/>
    <property type="evidence" value="ECO:0007669"/>
    <property type="project" value="InterPro"/>
</dbReference>
<dbReference type="GO" id="GO:0016491">
    <property type="term" value="F:oxidoreductase activity"/>
    <property type="evidence" value="ECO:0007669"/>
    <property type="project" value="InterPro"/>
</dbReference>
<dbReference type="GO" id="GO:0006953">
    <property type="term" value="P:acute-phase response"/>
    <property type="evidence" value="ECO:0007669"/>
    <property type="project" value="UniProtKB-KW"/>
</dbReference>
<dbReference type="GO" id="GO:0007597">
    <property type="term" value="P:blood coagulation, intrinsic pathway"/>
    <property type="evidence" value="ECO:0000318"/>
    <property type="project" value="GO_Central"/>
</dbReference>
<dbReference type="CDD" id="cd04227">
    <property type="entry name" value="CuRO_3_FVIII_like"/>
    <property type="match status" value="1"/>
</dbReference>
<dbReference type="CDD" id="cd00057">
    <property type="entry name" value="FA58C"/>
    <property type="match status" value="2"/>
</dbReference>
<dbReference type="FunFam" id="2.60.120.260:FF:000002">
    <property type="entry name" value="Coagulation factor VIII"/>
    <property type="match status" value="2"/>
</dbReference>
<dbReference type="FunFam" id="2.60.40.420:FF:000047">
    <property type="entry name" value="Coagulation factor VIII"/>
    <property type="match status" value="1"/>
</dbReference>
<dbReference type="FunFam" id="2.60.40.420:FF:000051">
    <property type="entry name" value="Coagulation factor VIII"/>
    <property type="match status" value="1"/>
</dbReference>
<dbReference type="FunFam" id="2.60.40.420:FF:000011">
    <property type="entry name" value="Coagulation factor VIII (Predicted)"/>
    <property type="match status" value="1"/>
</dbReference>
<dbReference type="FunFam" id="2.60.40.420:FF:000026">
    <property type="entry name" value="Coagulation factor VIII (Predicted)"/>
    <property type="match status" value="1"/>
</dbReference>
<dbReference type="FunFam" id="2.60.40.420:FF:000032">
    <property type="entry name" value="Coagulation factor VIII (Predicted)"/>
    <property type="match status" value="1"/>
</dbReference>
<dbReference type="FunFam" id="2.60.40.420:FF:000035">
    <property type="entry name" value="Coagulation factor VIII (Predicted)"/>
    <property type="match status" value="1"/>
</dbReference>
<dbReference type="Gene3D" id="2.60.40.420">
    <property type="entry name" value="Cupredoxins - blue copper proteins"/>
    <property type="match status" value="6"/>
</dbReference>
<dbReference type="Gene3D" id="2.60.120.260">
    <property type="entry name" value="Galactose-binding domain-like"/>
    <property type="match status" value="2"/>
</dbReference>
<dbReference type="InterPro" id="IPR011707">
    <property type="entry name" value="Cu-oxidase-like_N"/>
</dbReference>
<dbReference type="InterPro" id="IPR001117">
    <property type="entry name" value="Cu-oxidase_2nd"/>
</dbReference>
<dbReference type="InterPro" id="IPR011706">
    <property type="entry name" value="Cu-oxidase_C"/>
</dbReference>
<dbReference type="InterPro" id="IPR033138">
    <property type="entry name" value="Cu_oxidase_CS"/>
</dbReference>
<dbReference type="InterPro" id="IPR008972">
    <property type="entry name" value="Cupredoxin"/>
</dbReference>
<dbReference type="InterPro" id="IPR000421">
    <property type="entry name" value="FA58C"/>
</dbReference>
<dbReference type="InterPro" id="IPR024715">
    <property type="entry name" value="Factor_5/8-like"/>
</dbReference>
<dbReference type="InterPro" id="IPR008979">
    <property type="entry name" value="Galactose-bd-like_sf"/>
</dbReference>
<dbReference type="InterPro" id="IPR050633">
    <property type="entry name" value="Neuropilin_MCO_CoagFactor"/>
</dbReference>
<dbReference type="PANTHER" id="PTHR46806:SF7">
    <property type="entry name" value="COAGULATION FACTOR VIII"/>
    <property type="match status" value="1"/>
</dbReference>
<dbReference type="PANTHER" id="PTHR46806">
    <property type="entry name" value="F5/8 TYPE C DOMAIN-CONTAINING PROTEIN"/>
    <property type="match status" value="1"/>
</dbReference>
<dbReference type="Pfam" id="PF00394">
    <property type="entry name" value="Cu-oxidase"/>
    <property type="match status" value="1"/>
</dbReference>
<dbReference type="Pfam" id="PF07731">
    <property type="entry name" value="Cu-oxidase_2"/>
    <property type="match status" value="1"/>
</dbReference>
<dbReference type="Pfam" id="PF07732">
    <property type="entry name" value="Cu-oxidase_3"/>
    <property type="match status" value="2"/>
</dbReference>
<dbReference type="Pfam" id="PF00754">
    <property type="entry name" value="F5_F8_type_C"/>
    <property type="match status" value="2"/>
</dbReference>
<dbReference type="PIRSF" id="PIRSF000354">
    <property type="entry name" value="Factors_V_VIII"/>
    <property type="match status" value="1"/>
</dbReference>
<dbReference type="SMART" id="SM00231">
    <property type="entry name" value="FA58C"/>
    <property type="match status" value="2"/>
</dbReference>
<dbReference type="SUPFAM" id="SSF49503">
    <property type="entry name" value="Cupredoxins"/>
    <property type="match status" value="6"/>
</dbReference>
<dbReference type="SUPFAM" id="SSF49785">
    <property type="entry name" value="Galactose-binding domain-like"/>
    <property type="match status" value="2"/>
</dbReference>
<dbReference type="PROSITE" id="PS01285">
    <property type="entry name" value="FA58C_1"/>
    <property type="match status" value="2"/>
</dbReference>
<dbReference type="PROSITE" id="PS01286">
    <property type="entry name" value="FA58C_2"/>
    <property type="match status" value="2"/>
</dbReference>
<dbReference type="PROSITE" id="PS50022">
    <property type="entry name" value="FA58C_3"/>
    <property type="match status" value="2"/>
</dbReference>
<dbReference type="PROSITE" id="PS00079">
    <property type="entry name" value="MULTICOPPER_OXIDASE1"/>
    <property type="match status" value="3"/>
</dbReference>
<comment type="function">
    <text evidence="1">Factor VIII, along with calcium and phospholipid, acts as a cofactor for factor IXa when it converts factor X to the activated form, factor Xa.</text>
</comment>
<comment type="subunit">
    <text evidence="1">Interacts with vWF. vWF binding is essential for the stabilization of F8 in circulation (By similarity).</text>
</comment>
<comment type="subcellular location">
    <subcellularLocation>
        <location evidence="1">Secreted</location>
        <location evidence="1">Extracellular space</location>
    </subcellularLocation>
</comment>
<comment type="PTM">
    <text evidence="2">Proteolytically cleaved by cathepsin CTSG to produce a partially activated form.</text>
</comment>
<comment type="similarity">
    <text evidence="6">Belongs to the multicopper oxidase family.</text>
</comment>
<gene>
    <name type="primary">F8</name>
</gene>
<proteinExistence type="evidence at transcript level"/>
<name>FA8_CANLF</name>
<protein>
    <recommendedName>
        <fullName>Coagulation factor VIII</fullName>
    </recommendedName>
    <alternativeName>
        <fullName>Procoagulant component</fullName>
    </alternativeName>
</protein>
<feature type="signal peptide" evidence="3">
    <location>
        <begin position="1"/>
        <end position="19"/>
    </location>
</feature>
<feature type="chain" id="PRO_0000002966" description="Coagulation factor VIII">
    <location>
        <begin position="20"/>
        <end position="2343"/>
    </location>
</feature>
<feature type="domain" description="F5/8 type A 1">
    <location>
        <begin position="20"/>
        <end position="343"/>
    </location>
</feature>
<feature type="domain" description="Plastocyanin-like 1">
    <location>
        <begin position="20"/>
        <end position="199"/>
    </location>
</feature>
<feature type="domain" description="Plastocyanin-like 2">
    <location>
        <begin position="207"/>
        <end position="343"/>
    </location>
</feature>
<feature type="domain" description="F5/8 type A 2">
    <location>
        <begin position="393"/>
        <end position="724"/>
    </location>
</feature>
<feature type="domain" description="Plastocyanin-like 3">
    <location>
        <begin position="393"/>
        <end position="567"/>
    </location>
</feature>
<feature type="domain" description="Plastocyanin-like 4">
    <location>
        <begin position="577"/>
        <end position="724"/>
    </location>
</feature>
<feature type="domain" description="F5/8 type A 3">
    <location>
        <begin position="1705"/>
        <end position="2032"/>
    </location>
</feature>
<feature type="domain" description="Plastocyanin-like 5">
    <location>
        <begin position="1705"/>
        <end position="1869"/>
    </location>
</feature>
<feature type="domain" description="Plastocyanin-like 6">
    <location>
        <begin position="1879"/>
        <end position="2032"/>
    </location>
</feature>
<feature type="domain" description="F5/8 type C 1" evidence="4">
    <location>
        <begin position="2032"/>
        <end position="2180"/>
    </location>
</feature>
<feature type="domain" description="F5/8 type C 2" evidence="4">
    <location>
        <begin position="2185"/>
        <end position="2337"/>
    </location>
</feature>
<feature type="region of interest" description="Disordered" evidence="5">
    <location>
        <begin position="752"/>
        <end position="774"/>
    </location>
</feature>
<feature type="region of interest" description="B">
    <location>
        <begin position="754"/>
        <end position="1659"/>
    </location>
</feature>
<feature type="region of interest" description="Disordered" evidence="5">
    <location>
        <begin position="828"/>
        <end position="865"/>
    </location>
</feature>
<feature type="region of interest" description="Disordered" evidence="5">
    <location>
        <begin position="1124"/>
        <end position="1147"/>
    </location>
</feature>
<feature type="region of interest" description="Disordered" evidence="5">
    <location>
        <begin position="1302"/>
        <end position="1326"/>
    </location>
</feature>
<feature type="region of interest" description="Disordered" evidence="5">
    <location>
        <begin position="1592"/>
        <end position="1632"/>
    </location>
</feature>
<feature type="compositionally biased region" description="Polar residues" evidence="5">
    <location>
        <begin position="752"/>
        <end position="761"/>
    </location>
</feature>
<feature type="compositionally biased region" description="Basic and acidic residues" evidence="5">
    <location>
        <begin position="828"/>
        <end position="841"/>
    </location>
</feature>
<feature type="compositionally biased region" description="Basic and acidic residues" evidence="5">
    <location>
        <begin position="850"/>
        <end position="861"/>
    </location>
</feature>
<feature type="compositionally biased region" description="Polar residues" evidence="5">
    <location>
        <begin position="1125"/>
        <end position="1147"/>
    </location>
</feature>
<feature type="compositionally biased region" description="Polar residues" evidence="5">
    <location>
        <begin position="1302"/>
        <end position="1314"/>
    </location>
</feature>
<feature type="site" description="Cleavage; by thrombin" evidence="1">
    <location>
        <begin position="385"/>
        <end position="386"/>
    </location>
</feature>
<feature type="site" description="Cleavage; by thrombin" evidence="1">
    <location>
        <begin position="753"/>
        <end position="754"/>
    </location>
</feature>
<feature type="site" description="Cleavage (activation)" evidence="1">
    <location>
        <begin position="1320"/>
        <end position="1321"/>
    </location>
</feature>
<feature type="site" description="Cleavage (activation)" evidence="1">
    <location>
        <begin position="1659"/>
        <end position="1660"/>
    </location>
</feature>
<feature type="site" description="Cleavage; by thrombin" evidence="1">
    <location>
        <begin position="1700"/>
        <end position="1701"/>
    </location>
</feature>
<feature type="modified residue" description="Sulfotyrosine" evidence="1">
    <location>
        <position position="359"/>
    </location>
</feature>
<feature type="modified residue" description="Sulfotyrosine" evidence="1">
    <location>
        <position position="408"/>
    </location>
</feature>
<feature type="modified residue" description="Sulfotyrosine" evidence="1">
    <location>
        <position position="731"/>
    </location>
</feature>
<feature type="modified residue" description="Sulfotyrosine" evidence="1">
    <location>
        <position position="732"/>
    </location>
</feature>
<feature type="modified residue" description="Sulfotyrosine" evidence="1">
    <location>
        <position position="736"/>
    </location>
</feature>
<feature type="modified residue" description="Sulfotyrosine" evidence="1">
    <location>
        <position position="1675"/>
    </location>
</feature>
<feature type="modified residue" description="Sulfotyrosine" evidence="1">
    <location>
        <position position="1691"/>
    </location>
</feature>
<feature type="glycosylation site" description="N-linked (GlcNAc...) asparagine" evidence="3">
    <location>
        <position position="233"/>
    </location>
</feature>
<feature type="glycosylation site" description="N-linked (GlcNAc...) asparagine" evidence="3">
    <location>
        <position position="253"/>
    </location>
</feature>
<feature type="glycosylation site" description="N-linked (GlcNAc...) asparagine" evidence="3">
    <location>
        <position position="595"/>
    </location>
</feature>
<feature type="glycosylation site" description="N-linked (GlcNAc...) asparagine" evidence="3">
    <location>
        <position position="877"/>
    </location>
</feature>
<feature type="glycosylation site" description="N-linked (GlcNAc...) asparagine" evidence="3">
    <location>
        <position position="921"/>
    </location>
</feature>
<feature type="glycosylation site" description="N-linked (GlcNAc...) asparagine" evidence="3">
    <location>
        <position position="937"/>
    </location>
</feature>
<feature type="glycosylation site" description="N-linked (GlcNAc...) asparagine" evidence="3">
    <location>
        <position position="938"/>
    </location>
</feature>
<feature type="glycosylation site" description="N-linked (GlcNAc...) asparagine" evidence="3">
    <location>
        <position position="956"/>
    </location>
</feature>
<feature type="glycosylation site" description="N-linked (GlcNAc...) asparagine" evidence="3">
    <location>
        <position position="1007"/>
    </location>
</feature>
<feature type="glycosylation site" description="N-linked (GlcNAc...) asparagine" evidence="3">
    <location>
        <position position="1019"/>
    </location>
</feature>
<feature type="glycosylation site" description="N-linked (GlcNAc...) asparagine" evidence="3">
    <location>
        <position position="1037"/>
    </location>
</feature>
<feature type="glycosylation site" description="N-linked (GlcNAc...) asparagine" evidence="3">
    <location>
        <position position="1062"/>
    </location>
</feature>
<feature type="glycosylation site" description="N-linked (GlcNAc...) asparagine" evidence="3">
    <location>
        <position position="1069"/>
    </location>
</feature>
<feature type="glycosylation site" description="N-linked (GlcNAc...) asparagine" evidence="3">
    <location>
        <position position="1080"/>
    </location>
</feature>
<feature type="glycosylation site" description="N-linked (GlcNAc...) asparagine" evidence="3">
    <location>
        <position position="1179"/>
    </location>
</feature>
<feature type="glycosylation site" description="N-linked (GlcNAc...) asparagine" evidence="3">
    <location>
        <position position="1193"/>
    </location>
</feature>
<feature type="glycosylation site" description="N-linked (GlcNAc...) asparagine" evidence="3">
    <location>
        <position position="1275"/>
    </location>
</feature>
<feature type="glycosylation site" description="N-linked (GlcNAc...) asparagine" evidence="3">
    <location>
        <position position="1290"/>
    </location>
</feature>
<feature type="glycosylation site" description="N-linked (GlcNAc...) asparagine" evidence="3">
    <location>
        <position position="1308"/>
    </location>
</feature>
<feature type="glycosylation site" description="N-linked (GlcNAc...) asparagine" evidence="3">
    <location>
        <position position="1341"/>
    </location>
</feature>
<feature type="glycosylation site" description="N-linked (GlcNAc...) asparagine" evidence="3">
    <location>
        <position position="1391"/>
    </location>
</feature>
<feature type="glycosylation site" description="N-linked (GlcNAc...) asparagine" evidence="3">
    <location>
        <position position="1419"/>
    </location>
</feature>
<feature type="glycosylation site" description="N-linked (GlcNAc...) asparagine" evidence="3">
    <location>
        <position position="1429"/>
    </location>
</feature>
<feature type="glycosylation site" description="N-linked (GlcNAc...) asparagine" evidence="3">
    <location>
        <position position="1453"/>
    </location>
</feature>
<feature type="glycosylation site" description="N-linked (GlcNAc...) asparagine" evidence="3">
    <location>
        <position position="1547"/>
    </location>
</feature>
<feature type="glycosylation site" description="N-linked (GlcNAc...) asparagine" evidence="3">
    <location>
        <position position="1618"/>
    </location>
</feature>
<feature type="glycosylation site" description="N-linked (GlcNAc...) asparagine" evidence="3">
    <location>
        <position position="1821"/>
    </location>
</feature>
<feature type="glycosylation site" description="N-linked (GlcNAc...) asparagine" evidence="3">
    <location>
        <position position="2129"/>
    </location>
</feature>
<feature type="glycosylation site" description="N-linked (GlcNAc...) asparagine" evidence="3">
    <location>
        <position position="2281"/>
    </location>
</feature>
<feature type="disulfide bond" evidence="4">
    <location>
        <begin position="2032"/>
        <end position="2180"/>
    </location>
</feature>
<feature type="disulfide bond" evidence="4">
    <location>
        <begin position="2185"/>
        <end position="2337"/>
    </location>
</feature>
<feature type="sequence conflict" description="In Ref. 2; AAC05384." evidence="6" ref="2">
    <original>R</original>
    <variation>G</variation>
    <location>
        <position position="293"/>
    </location>
</feature>
<feature type="sequence conflict" description="In Ref. 2; AAC05384." evidence="6" ref="2">
    <original>D</original>
    <variation>G</variation>
    <location>
        <position position="365"/>
    </location>
</feature>
<feature type="sequence conflict" description="In Ref. 2; AAC05384." evidence="6" ref="2">
    <original>N</original>
    <variation>K</variation>
    <location>
        <position position="480"/>
    </location>
</feature>
<feature type="sequence conflict" description="In Ref. 2; AAC05384." evidence="6" ref="2">
    <original>F</original>
    <variation>L</variation>
    <location>
        <position position="592"/>
    </location>
</feature>
<feature type="sequence conflict" description="In Ref. 2; AAC05384." evidence="6" ref="2">
    <original>N</original>
    <variation>D</variation>
    <location>
        <position position="603"/>
    </location>
</feature>
<feature type="sequence conflict" description="In Ref. 2; AAC05384." evidence="6" ref="2">
    <original>S</original>
    <variation>G</variation>
    <location>
        <position position="928"/>
    </location>
</feature>
<feature type="sequence conflict" description="In Ref. 2; AAC05384." evidence="6" ref="2">
    <original>P</original>
    <variation>L</variation>
    <location>
        <position position="1203"/>
    </location>
</feature>
<feature type="sequence conflict" description="In Ref. 2; AAC05384." evidence="6" ref="2">
    <original>N</original>
    <variation>D</variation>
    <location>
        <position position="1696"/>
    </location>
</feature>
<feature type="sequence conflict" description="In Ref. 2; AAC05384." evidence="6" ref="2">
    <original>G</original>
    <variation>D</variation>
    <location>
        <position position="2289"/>
    </location>
</feature>
<feature type="sequence conflict" description="In Ref. 2; AAC05384." evidence="6" ref="2">
    <original>R</original>
    <variation>A</variation>
    <location>
        <position position="2307"/>
    </location>
</feature>
<sequence>MQVELYTCCFLCLLPFSLSATRKYYLGAVELSWDYMQSDLLSALHADTSFSSRVPGSLPLTTSVTYRKTVFVEFTDDLFNIAKPRPPWMGLLGPTIQAEVYDTVVIVLKNMASHPVSLHAVGVSYWKASEGAEYEDQTSQKEKEDDNVIPGESHTYVWQVLKENGPMASDPPCLTYSYFSHVDLVKDLNSGLIGALLVCKEGSLAKERTQTLQEFVLLFAVFDEGKSWHSETNASLTQAEAQHELHTINGYVNRSLPGLTVCHKRSVYWHVIGMGTTPEVHSIFLEGHTFLVRNHRQASLEISPITFLTAQTFLMDLGQFLLFCHIPSHQHDGMEAYVKVDSCPEEPQLRMKNNEDKDYDDGLYDSDMDVVSFDDDSSSPFIQIRSVAKKHPKTWVHYIAAEEEDWDYAPSGPTPNDRSHKNLYLNNGPQRIGKKYKKVRFVAYTDETFKTREAIQYESGILGPLLYGEVGDTLLIIFKNQASRPYNIYPHGINYVTPLHTGRLPKGVKHLKDMPILPGEIFKYKWTVTVEDGPTKSDPRCLTRYYSSFINLERDLASGLIGPLLICYKESVDQRGNQMMSDKRNVILFSVFDENRSWYLTENMQRFLPNADVVQPHDPEFQLSNIMHSINGYVFDNLQLSVCLHEVAYWYILSVGAQTDFLSVFFSGYTFKHKMVYEDTLTLFPFSGETVFMSMENPGLWVLGCHNSDFRNRGMTALLKVSSCNRNIDDYYEDTYEDIPTPLLNENNVIKPRSFSQNSRHPSTKEKQLKATTTPENDIEKIDLQSGERTQLIKAQSVSSSDLLMLLGQNPTPRGLFLSDLREATDRADDHSRGAIERNKGPPEVASLRPELRHSEDREFTPEPELQLRLNENLGTNTTVELKKLDLKISSSSDSLMTSPTIPSDKLAAATEKTGSLGPPNMSVHFNSHLGTIVFGNNSSHLIQSGVPLELSEEDNDSKLLEAPLMNIQESSLRENVLSMESNRLFKEERIRGPASLIKDNALFKVNISSVKTNRAPVNLTTNRKTRVAIPTLLIENSTSVWQDIMLERNTEFKEVTSLIHNETFMDRNTTALGLNHVSNKTTLSKNVEMAHQKKEDPVPLRAENPDLSSSKIPFLPDWIKTHGKNSLSSEQRPSPKQLTSLGSEKSVKDQNFLSEEKVVVGEDEFTKDTELQEIFPNNKSIFFANLANVQENDTYNQEKKSPEEIERKEKLTQENVALPQAHTMIGTKNFLKNLFLLSTKQNVAGLEEQPYTPILQDTRSLNDSPHSEGIHMANFSKIREEANLEGLGNQTNQMVERFPSTTRMSSNASQHVITQRGKRSLKQPRLSQGEIKFERKVIANDTSTQWSKNMNYLAQGTLTQIEYNEKEKRAITQSPLSDCSMRNHVTIQMNDSALPVAKESASPSVRHTDLTKIPSQHNSSHLPASACNYTFRERTSGVQEGSHFLQEAKRNNLSLAFVTLGITEGQGKFSSLGKSATNQPMYKKLENTVLLQPGLSETSDKVELLSQVHVDQEDSFPTKTSNDSPGHLDLMGKIFLQKTQGPVKMNKTNSPGKVPFLKWATESSEKIPSKLLGVLAWDNHYDTQIPSEEWKSQKKSQTNTAFKRKDTILPLGPCENNDSTAAINEGQDKPQREAMWAKQGEPGRLCSQNPPVSKHHQREITVTTLQPEEDKFEYDDTFSIEMKREDFDIYGDYENQGLRSFQKKTRHYFIAAVERLWDYGMSRSPHILRNRAQSGDVQQFKKVVFQEFTDGSFTQPLYRGELNEHLGLLGPYIRAEVEDNIVVTFKNQASRPYSFYSSLISYDEDEGQGAEPRRKFVNPNETKIYFWKVQHHMAPTKDEFDCKAWAYFSDVDLEKDVHSGLIGPLLICRSNTLNPAHGRQVTVQEFALVFTIFDETKSWYFTENLERNCRAPCNVQKEDPTLKENFRFHAINGYVKDTLPGLVMAQDQKVRWYLLSMGSNENIHSIHFSGHVFTVRKKEEYKMAVYNLYPGVFETVEMLPSQVGIWRIECLIGEHLQAGMSTLFLVYSKKCQTPLGMASGHIRDFQITASGQYGQWAPKLARLHYSGSINAWSTKDPFSWIKVDLLAPMIIHGIMTQGARQKFSSLYVSQFIIMYSLDGNKWHSYRGNSTGTLMVFFGNVDSSGIKHNIFNPPIIAQYIRLHPTHYSIRSTLRMELLGCDFNSCSMPLGMESKAISDAQITASSYLSSMLATWSPSQARLHLQGRTNAWRPQANNPKEWLQVDFRKTMKVTGITTQGVKSLLISMYVKEFLISSSQDGHNWTLFLQNGKVKVFQGNRDSSTPVRNRLEPPLVARYVRLHPQSWAHHIALRLEVLGCDTQQPA</sequence>
<evidence type="ECO:0000250" key="1"/>
<evidence type="ECO:0000250" key="2">
    <source>
        <dbReference type="UniProtKB" id="P00451"/>
    </source>
</evidence>
<evidence type="ECO:0000255" key="3"/>
<evidence type="ECO:0000255" key="4">
    <source>
        <dbReference type="PROSITE-ProRule" id="PRU00081"/>
    </source>
</evidence>
<evidence type="ECO:0000256" key="5">
    <source>
        <dbReference type="SAM" id="MobiDB-lite"/>
    </source>
</evidence>
<evidence type="ECO:0000305" key="6"/>
<reference key="1">
    <citation type="journal article" date="1998" name="Thromb. Haemost.">
        <title>The canine factor VIII cDNA and 5' flanking sequence.</title>
        <authorList>
            <person name="Cameron C."/>
            <person name="Notley C."/>
            <person name="Hoyle S."/>
            <person name="McGlynn L."/>
            <person name="Hough C."/>
            <person name="Kamisue S."/>
            <person name="Giles A."/>
            <person name="Lillicrap D."/>
        </authorList>
    </citation>
    <scope>NUCLEOTIDE SEQUENCE [MRNA]</scope>
    <source>
        <tissue>Liver</tissue>
    </source>
</reference>
<reference key="2">
    <citation type="submission" date="1998-02" db="EMBL/GenBank/DDBJ databases">
        <title>Characterization of the canine factor VIII cDNA.</title>
        <authorList>
            <person name="Gordy P.W."/>
            <person name="Bowen R.A."/>
        </authorList>
    </citation>
    <scope>NUCLEOTIDE SEQUENCE [MRNA]</scope>
    <source>
        <tissue>Kidney</tissue>
    </source>
</reference>
<keyword id="KW-0011">Acute phase</keyword>
<keyword id="KW-0094">Blood coagulation</keyword>
<keyword id="KW-0106">Calcium</keyword>
<keyword id="KW-1015">Disulfide bond</keyword>
<keyword id="KW-0325">Glycoprotein</keyword>
<keyword id="KW-0356">Hemostasis</keyword>
<keyword id="KW-0479">Metal-binding</keyword>
<keyword id="KW-1185">Reference proteome</keyword>
<keyword id="KW-0677">Repeat</keyword>
<keyword id="KW-0964">Secreted</keyword>
<keyword id="KW-0732">Signal</keyword>
<keyword id="KW-0765">Sulfation</keyword>